<reference key="1">
    <citation type="journal article" date="2004" name="Proc. Natl. Acad. Sci. U.S.A.">
        <title>Insights into the evolution of Yersinia pestis through whole-genome comparison with Yersinia pseudotuberculosis.</title>
        <authorList>
            <person name="Chain P.S.G."/>
            <person name="Carniel E."/>
            <person name="Larimer F.W."/>
            <person name="Lamerdin J."/>
            <person name="Stoutland P.O."/>
            <person name="Regala W.M."/>
            <person name="Georgescu A.M."/>
            <person name="Vergez L.M."/>
            <person name="Land M.L."/>
            <person name="Motin V.L."/>
            <person name="Brubaker R.R."/>
            <person name="Fowler J."/>
            <person name="Hinnebusch J."/>
            <person name="Marceau M."/>
            <person name="Medigue C."/>
            <person name="Simonet M."/>
            <person name="Chenal-Francisque V."/>
            <person name="Souza B."/>
            <person name="Dacheux D."/>
            <person name="Elliott J.M."/>
            <person name="Derbise A."/>
            <person name="Hauser L.J."/>
            <person name="Garcia E."/>
        </authorList>
    </citation>
    <scope>NUCLEOTIDE SEQUENCE [LARGE SCALE GENOMIC DNA]</scope>
    <source>
        <strain>IP32953</strain>
    </source>
</reference>
<accession>Q66D80</accession>
<gene>
    <name evidence="1" type="primary">galK</name>
    <name type="ordered locus">YPTB1169</name>
</gene>
<dbReference type="EC" id="2.7.1.6" evidence="1"/>
<dbReference type="EMBL" id="BX936398">
    <property type="protein sequence ID" value="CAH20409.1"/>
    <property type="molecule type" value="Genomic_DNA"/>
</dbReference>
<dbReference type="RefSeq" id="WP_011191950.1">
    <property type="nucleotide sequence ID" value="NC_006155.1"/>
</dbReference>
<dbReference type="SMR" id="Q66D80"/>
<dbReference type="KEGG" id="ypo:BZ17_1360"/>
<dbReference type="KEGG" id="yps:YPTB1169"/>
<dbReference type="PATRIC" id="fig|273123.14.peg.1451"/>
<dbReference type="UniPathway" id="UPA00214"/>
<dbReference type="Proteomes" id="UP000001011">
    <property type="component" value="Chromosome"/>
</dbReference>
<dbReference type="GO" id="GO:0005829">
    <property type="term" value="C:cytosol"/>
    <property type="evidence" value="ECO:0007669"/>
    <property type="project" value="TreeGrafter"/>
</dbReference>
<dbReference type="GO" id="GO:0005524">
    <property type="term" value="F:ATP binding"/>
    <property type="evidence" value="ECO:0007669"/>
    <property type="project" value="UniProtKB-UniRule"/>
</dbReference>
<dbReference type="GO" id="GO:0004335">
    <property type="term" value="F:galactokinase activity"/>
    <property type="evidence" value="ECO:0007669"/>
    <property type="project" value="UniProtKB-UniRule"/>
</dbReference>
<dbReference type="GO" id="GO:0000287">
    <property type="term" value="F:magnesium ion binding"/>
    <property type="evidence" value="ECO:0007669"/>
    <property type="project" value="UniProtKB-UniRule"/>
</dbReference>
<dbReference type="GO" id="GO:0006012">
    <property type="term" value="P:galactose metabolic process"/>
    <property type="evidence" value="ECO:0007669"/>
    <property type="project" value="UniProtKB-UniRule"/>
</dbReference>
<dbReference type="FunFam" id="3.30.230.10:FF:000017">
    <property type="entry name" value="Galactokinase"/>
    <property type="match status" value="1"/>
</dbReference>
<dbReference type="FunFam" id="3.30.70.890:FF:000001">
    <property type="entry name" value="Galactokinase"/>
    <property type="match status" value="1"/>
</dbReference>
<dbReference type="Gene3D" id="3.30.230.10">
    <property type="match status" value="1"/>
</dbReference>
<dbReference type="Gene3D" id="3.30.70.890">
    <property type="entry name" value="GHMP kinase, C-terminal domain"/>
    <property type="match status" value="1"/>
</dbReference>
<dbReference type="HAMAP" id="MF_00246">
    <property type="entry name" value="Galactokinase"/>
    <property type="match status" value="1"/>
</dbReference>
<dbReference type="InterPro" id="IPR000705">
    <property type="entry name" value="Galactokinase"/>
</dbReference>
<dbReference type="InterPro" id="IPR022963">
    <property type="entry name" value="Galactokinase_bac"/>
</dbReference>
<dbReference type="InterPro" id="IPR019741">
    <property type="entry name" value="Galactokinase_CS"/>
</dbReference>
<dbReference type="InterPro" id="IPR019539">
    <property type="entry name" value="GalKase_N"/>
</dbReference>
<dbReference type="InterPro" id="IPR013750">
    <property type="entry name" value="GHMP_kinase_C_dom"/>
</dbReference>
<dbReference type="InterPro" id="IPR036554">
    <property type="entry name" value="GHMP_kinase_C_sf"/>
</dbReference>
<dbReference type="InterPro" id="IPR006204">
    <property type="entry name" value="GHMP_kinase_N_dom"/>
</dbReference>
<dbReference type="InterPro" id="IPR006203">
    <property type="entry name" value="GHMP_knse_ATP-bd_CS"/>
</dbReference>
<dbReference type="InterPro" id="IPR006206">
    <property type="entry name" value="Mevalonate/galactokinase"/>
</dbReference>
<dbReference type="InterPro" id="IPR020568">
    <property type="entry name" value="Ribosomal_Su5_D2-typ_SF"/>
</dbReference>
<dbReference type="InterPro" id="IPR014721">
    <property type="entry name" value="Ribsml_uS5_D2-typ_fold_subgr"/>
</dbReference>
<dbReference type="NCBIfam" id="TIGR00131">
    <property type="entry name" value="gal_kin"/>
    <property type="match status" value="1"/>
</dbReference>
<dbReference type="NCBIfam" id="NF003472">
    <property type="entry name" value="PRK05101.1"/>
    <property type="match status" value="1"/>
</dbReference>
<dbReference type="PANTHER" id="PTHR10457:SF7">
    <property type="entry name" value="GALACTOKINASE-RELATED"/>
    <property type="match status" value="1"/>
</dbReference>
<dbReference type="PANTHER" id="PTHR10457">
    <property type="entry name" value="MEVALONATE KINASE/GALACTOKINASE"/>
    <property type="match status" value="1"/>
</dbReference>
<dbReference type="Pfam" id="PF10509">
    <property type="entry name" value="GalKase_gal_bdg"/>
    <property type="match status" value="1"/>
</dbReference>
<dbReference type="Pfam" id="PF08544">
    <property type="entry name" value="GHMP_kinases_C"/>
    <property type="match status" value="1"/>
</dbReference>
<dbReference type="Pfam" id="PF00288">
    <property type="entry name" value="GHMP_kinases_N"/>
    <property type="match status" value="1"/>
</dbReference>
<dbReference type="PIRSF" id="PIRSF000530">
    <property type="entry name" value="Galactokinase"/>
    <property type="match status" value="1"/>
</dbReference>
<dbReference type="PRINTS" id="PR00473">
    <property type="entry name" value="GALCTOKINASE"/>
</dbReference>
<dbReference type="PRINTS" id="PR00959">
    <property type="entry name" value="MEVGALKINASE"/>
</dbReference>
<dbReference type="SUPFAM" id="SSF55060">
    <property type="entry name" value="GHMP Kinase, C-terminal domain"/>
    <property type="match status" value="1"/>
</dbReference>
<dbReference type="SUPFAM" id="SSF54211">
    <property type="entry name" value="Ribosomal protein S5 domain 2-like"/>
    <property type="match status" value="1"/>
</dbReference>
<dbReference type="PROSITE" id="PS00106">
    <property type="entry name" value="GALACTOKINASE"/>
    <property type="match status" value="1"/>
</dbReference>
<dbReference type="PROSITE" id="PS00627">
    <property type="entry name" value="GHMP_KINASES_ATP"/>
    <property type="match status" value="1"/>
</dbReference>
<organism>
    <name type="scientific">Yersinia pseudotuberculosis serotype I (strain IP32953)</name>
    <dbReference type="NCBI Taxonomy" id="273123"/>
    <lineage>
        <taxon>Bacteria</taxon>
        <taxon>Pseudomonadati</taxon>
        <taxon>Pseudomonadota</taxon>
        <taxon>Gammaproteobacteria</taxon>
        <taxon>Enterobacterales</taxon>
        <taxon>Yersiniaceae</taxon>
        <taxon>Yersinia</taxon>
    </lineage>
</organism>
<evidence type="ECO:0000255" key="1">
    <source>
        <dbReference type="HAMAP-Rule" id="MF_00246"/>
    </source>
</evidence>
<name>GAL1_YERPS</name>
<proteinExistence type="inferred from homology"/>
<protein>
    <recommendedName>
        <fullName evidence="1">Galactokinase</fullName>
        <ecNumber evidence="1">2.7.1.6</ecNumber>
    </recommendedName>
    <alternativeName>
        <fullName evidence="1">Galactose kinase</fullName>
    </alternativeName>
</protein>
<feature type="chain" id="PRO_1000005775" description="Galactokinase">
    <location>
        <begin position="1"/>
        <end position="383"/>
    </location>
</feature>
<feature type="active site" description="Proton acceptor" evidence="1">
    <location>
        <position position="174"/>
    </location>
</feature>
<feature type="binding site" evidence="1">
    <location>
        <begin position="34"/>
        <end position="37"/>
    </location>
    <ligand>
        <name>substrate</name>
    </ligand>
</feature>
<feature type="binding site" evidence="1">
    <location>
        <begin position="124"/>
        <end position="130"/>
    </location>
    <ligand>
        <name>ATP</name>
        <dbReference type="ChEBI" id="CHEBI:30616"/>
    </ligand>
</feature>
<feature type="binding site" evidence="1">
    <location>
        <position position="130"/>
    </location>
    <ligand>
        <name>Mg(2+)</name>
        <dbReference type="ChEBI" id="CHEBI:18420"/>
    </ligand>
</feature>
<feature type="binding site" evidence="1">
    <location>
        <position position="162"/>
    </location>
    <ligand>
        <name>Mg(2+)</name>
        <dbReference type="ChEBI" id="CHEBI:18420"/>
    </ligand>
</feature>
<feature type="binding site" evidence="1">
    <location>
        <position position="223"/>
    </location>
    <ligand>
        <name>substrate</name>
    </ligand>
</feature>
<feature type="site" description="Transition state stabilizer" evidence="1">
    <location>
        <position position="28"/>
    </location>
</feature>
<comment type="function">
    <text evidence="1">Catalyzes the transfer of the gamma-phosphate of ATP to D-galactose to form alpha-D-galactose-1-phosphate (Gal-1-P).</text>
</comment>
<comment type="catalytic activity">
    <reaction evidence="1">
        <text>alpha-D-galactose + ATP = alpha-D-galactose 1-phosphate + ADP + H(+)</text>
        <dbReference type="Rhea" id="RHEA:13553"/>
        <dbReference type="ChEBI" id="CHEBI:15378"/>
        <dbReference type="ChEBI" id="CHEBI:28061"/>
        <dbReference type="ChEBI" id="CHEBI:30616"/>
        <dbReference type="ChEBI" id="CHEBI:58336"/>
        <dbReference type="ChEBI" id="CHEBI:456216"/>
        <dbReference type="EC" id="2.7.1.6"/>
    </reaction>
</comment>
<comment type="pathway">
    <text evidence="1">Carbohydrate metabolism; galactose metabolism.</text>
</comment>
<comment type="subcellular location">
    <subcellularLocation>
        <location evidence="1">Cytoplasm</location>
    </subcellularLocation>
</comment>
<comment type="similarity">
    <text evidence="1">Belongs to the GHMP kinase family. GalK subfamily.</text>
</comment>
<sequence length="383" mass="41794">MSLKQHTQTIFRQQFDRESDITIKAPGRVNLIGEHTDYNDGFVLPCAINYETVISCGKRGDRQIRVIAADYENQQDIFSLDAPIVPHPEYRWADYVRGVVKHLQMRNADFGGADLVICGNVPQGAGLSSSASLEVAVGQALQSLYQLPLSGVELALNGQEAENQFVGCNCGIMDQLISALGKKDHALLIDCRTLETRAVPMPENMAVVIINSNIQRGLVDSEYNTRRQQCEAAARFFGVKALRDVEPSLFFSIQDELDPVVAKRARHVISENARTLAAADALAAGNLKLMGQLMQESHISMRDDFEITVPPIDRLVEIVKSVIGDQGGVRMTGGGFGGCIVALMPLELVEQVRTTVAQEYPAHSGGKKETFYVCQASQGAGLC</sequence>
<keyword id="KW-0067">ATP-binding</keyword>
<keyword id="KW-0119">Carbohydrate metabolism</keyword>
<keyword id="KW-0963">Cytoplasm</keyword>
<keyword id="KW-0299">Galactose metabolism</keyword>
<keyword id="KW-0418">Kinase</keyword>
<keyword id="KW-0460">Magnesium</keyword>
<keyword id="KW-0479">Metal-binding</keyword>
<keyword id="KW-0547">Nucleotide-binding</keyword>
<keyword id="KW-0808">Transferase</keyword>